<gene>
    <name type="primary">RPS17</name>
    <name type="ORF">B179</name>
</gene>
<proteinExistence type="evidence at transcript level"/>
<reference key="1">
    <citation type="journal article" date="2000" name="Anal. Biochem.">
        <title>A method for the large-scale cloning of nuclear proteins and nuclear targeting sequences on a functional basis.</title>
        <authorList>
            <person name="Pichon B."/>
            <person name="Mercan D."/>
            <person name="Pouillon V."/>
            <person name="Christophe-Hobertus C."/>
            <person name="Christophe D."/>
        </authorList>
    </citation>
    <scope>NUCLEOTIDE SEQUENCE [LARGE SCALE MRNA]</scope>
    <source>
        <tissue>Thyroid</tissue>
    </source>
</reference>
<name>RS17_CANLF</name>
<keyword id="KW-0963">Cytoplasm</keyword>
<keyword id="KW-1017">Isopeptide bond</keyword>
<keyword id="KW-0539">Nucleus</keyword>
<keyword id="KW-0597">Phosphoprotein</keyword>
<keyword id="KW-1185">Reference proteome</keyword>
<keyword id="KW-0687">Ribonucleoprotein</keyword>
<keyword id="KW-0689">Ribosomal protein</keyword>
<keyword id="KW-0832">Ubl conjugation</keyword>
<sequence length="135" mass="15524">MGRVRTKTVKKAARVIIEKYYTRLGNDFHTNKRVCEEIAIIPSKKLRNKIAGYVTHLMKRIQRGPVRGISIKLQEEERERRDNYVPEVSALDQEIIEVDPDTKEMLKLLDFGSLSNLQVTQPTVGMNFKTPRGAV</sequence>
<protein>
    <recommendedName>
        <fullName evidence="3">Small ribosomal subunit protein eS17</fullName>
    </recommendedName>
    <alternativeName>
        <fullName>40S ribosomal protein S17</fullName>
    </alternativeName>
</protein>
<accession>P63273</accession>
<accession>P06584</accession>
<feature type="chain" id="PRO_0000141522" description="Small ribosomal subunit protein eS17">
    <location>
        <begin position="1"/>
        <end position="135"/>
    </location>
</feature>
<feature type="modified residue" description="N6-succinyllysine" evidence="2">
    <location>
        <position position="19"/>
    </location>
</feature>
<feature type="modified residue" description="Phosphoserine" evidence="1">
    <location>
        <position position="113"/>
    </location>
</feature>
<feature type="modified residue" description="Phosphothreonine" evidence="1">
    <location>
        <position position="130"/>
    </location>
</feature>
<feature type="cross-link" description="Glycyl lysine isopeptide (Lys-Gly) (interchain with G-Cter in SUMO1); alternate" evidence="1">
    <location>
        <position position="103"/>
    </location>
</feature>
<feature type="cross-link" description="Glycyl lysine isopeptide (Lys-Gly) (interchain with G-Cter in SUMO2); alternate" evidence="1">
    <location>
        <position position="103"/>
    </location>
</feature>
<comment type="function">
    <text evidence="1">Component of the small ribosomal subunit. The ribosome is a large ribonucleoprotein complex responsible for the synthesis of proteins in the cell. Part of the small subunit (SSU) processome, first precursor of the small eukaryotic ribosomal subunit. During the assembly of the SSU processome in the nucleolus, many ribosome biogenesis factors, an RNA chaperone and ribosomal proteins associate with the nascent pre-rRNA and work in concert to generate RNA folding, modifications, rearrangements and cleavage as well as targeted degradation of pre-ribosomal RNA by the RNA exosome.</text>
</comment>
<comment type="subunit">
    <text evidence="1">Component of the small ribosomal subunit. Part of the small subunit (SSU) processome, composed of more than 70 proteins and the RNA chaperone small nucleolar RNA (snoRNA) U3.</text>
</comment>
<comment type="subcellular location">
    <subcellularLocation>
        <location evidence="1">Cytoplasm</location>
    </subcellularLocation>
    <subcellularLocation>
        <location evidence="1">Nucleus</location>
        <location evidence="1">Nucleolus</location>
    </subcellularLocation>
</comment>
<comment type="PTM">
    <text evidence="1">Ubiquitinated at Lys-103 by RNF14 and RNF25 in response to ribosome collisions (ribosome stalling).</text>
</comment>
<comment type="similarity">
    <text evidence="3">Belongs to the eukaryotic ribosomal protein eS17 family.</text>
</comment>
<evidence type="ECO:0000250" key="1">
    <source>
        <dbReference type="UniProtKB" id="P08708"/>
    </source>
</evidence>
<evidence type="ECO:0000250" key="2">
    <source>
        <dbReference type="UniProtKB" id="P63276"/>
    </source>
</evidence>
<evidence type="ECO:0000305" key="3"/>
<dbReference type="EMBL" id="AJ388523">
    <property type="protein sequence ID" value="CAB46825.1"/>
    <property type="molecule type" value="mRNA"/>
</dbReference>
<dbReference type="RefSeq" id="NP_001003099.1">
    <property type="nucleotide sequence ID" value="NM_001003099.1"/>
</dbReference>
<dbReference type="SMR" id="P63273"/>
<dbReference type="FunCoup" id="P63273">
    <property type="interactions" value="1607"/>
</dbReference>
<dbReference type="STRING" id="9615.ENSCAFP00000039406"/>
<dbReference type="PaxDb" id="9612-ENSCAFP00000039406"/>
<dbReference type="Ensembl" id="ENSCAFT00000036542.4">
    <property type="protein sequence ID" value="ENSCAFP00000031934.4"/>
    <property type="gene ID" value="ENSCAFG00000013053.6"/>
</dbReference>
<dbReference type="Ensembl" id="ENSCAFT00030001595.1">
    <property type="protein sequence ID" value="ENSCAFP00030001420.1"/>
    <property type="gene ID" value="ENSCAFG00030000918.1"/>
</dbReference>
<dbReference type="Ensembl" id="ENSCAFT00040007056.1">
    <property type="protein sequence ID" value="ENSCAFP00040006133.1"/>
    <property type="gene ID" value="ENSCAFG00040003691.1"/>
</dbReference>
<dbReference type="Ensembl" id="ENSCAFT00845006224.1">
    <property type="protein sequence ID" value="ENSCAFP00845004946.1"/>
    <property type="gene ID" value="ENSCAFG00845003480.1"/>
</dbReference>
<dbReference type="GeneID" id="403681"/>
<dbReference type="KEGG" id="cfa:403681"/>
<dbReference type="CTD" id="6218"/>
<dbReference type="VEuPathDB" id="HostDB:ENSCAFG00845003480"/>
<dbReference type="eggNOG" id="KOG0187">
    <property type="taxonomic scope" value="Eukaryota"/>
</dbReference>
<dbReference type="GeneTree" id="ENSGT00390000006548"/>
<dbReference type="InParanoid" id="P63273"/>
<dbReference type="OrthoDB" id="1727351at2759"/>
<dbReference type="Reactome" id="R-CFA-156827">
    <property type="pathway name" value="L13a-mediated translational silencing of Ceruloplasmin expression"/>
</dbReference>
<dbReference type="Reactome" id="R-CFA-1799339">
    <property type="pathway name" value="SRP-dependent cotranslational protein targeting to membrane"/>
</dbReference>
<dbReference type="Reactome" id="R-CFA-72649">
    <property type="pathway name" value="Translation initiation complex formation"/>
</dbReference>
<dbReference type="Reactome" id="R-CFA-72689">
    <property type="pathway name" value="Formation of a pool of free 40S subunits"/>
</dbReference>
<dbReference type="Reactome" id="R-CFA-72695">
    <property type="pathway name" value="Formation of the ternary complex, and subsequently, the 43S complex"/>
</dbReference>
<dbReference type="Reactome" id="R-CFA-72702">
    <property type="pathway name" value="Ribosomal scanning and start codon recognition"/>
</dbReference>
<dbReference type="Reactome" id="R-CFA-72706">
    <property type="pathway name" value="GTP hydrolysis and joining of the 60S ribosomal subunit"/>
</dbReference>
<dbReference type="Reactome" id="R-CFA-975956">
    <property type="pathway name" value="Nonsense Mediated Decay (NMD) independent of the Exon Junction Complex (EJC)"/>
</dbReference>
<dbReference type="Reactome" id="R-CFA-975957">
    <property type="pathway name" value="Nonsense Mediated Decay (NMD) enhanced by the Exon Junction Complex (EJC)"/>
</dbReference>
<dbReference type="Proteomes" id="UP000002254">
    <property type="component" value="Chromosome 3"/>
</dbReference>
<dbReference type="Proteomes" id="UP000694429">
    <property type="component" value="Chromosome 3"/>
</dbReference>
<dbReference type="Proteomes" id="UP000694542">
    <property type="component" value="Chromosome 3"/>
</dbReference>
<dbReference type="Proteomes" id="UP000805418">
    <property type="component" value="Chromosome 3"/>
</dbReference>
<dbReference type="GO" id="GO:0022626">
    <property type="term" value="C:cytosolic ribosome"/>
    <property type="evidence" value="ECO:0007669"/>
    <property type="project" value="UniProtKB-ARBA"/>
</dbReference>
<dbReference type="GO" id="GO:0005730">
    <property type="term" value="C:nucleolus"/>
    <property type="evidence" value="ECO:0007669"/>
    <property type="project" value="UniProtKB-SubCell"/>
</dbReference>
<dbReference type="GO" id="GO:0032040">
    <property type="term" value="C:small-subunit processome"/>
    <property type="evidence" value="ECO:0000250"/>
    <property type="project" value="UniProtKB"/>
</dbReference>
<dbReference type="GO" id="GO:0003735">
    <property type="term" value="F:structural constituent of ribosome"/>
    <property type="evidence" value="ECO:0007669"/>
    <property type="project" value="InterPro"/>
</dbReference>
<dbReference type="GO" id="GO:0042274">
    <property type="term" value="P:ribosomal small subunit biogenesis"/>
    <property type="evidence" value="ECO:0000250"/>
    <property type="project" value="UniProtKB"/>
</dbReference>
<dbReference type="GO" id="GO:0006412">
    <property type="term" value="P:translation"/>
    <property type="evidence" value="ECO:0007669"/>
    <property type="project" value="InterPro"/>
</dbReference>
<dbReference type="FunFam" id="1.10.60.20:FF:000001">
    <property type="entry name" value="40S ribosomal protein S17"/>
    <property type="match status" value="1"/>
</dbReference>
<dbReference type="Gene3D" id="1.10.60.20">
    <property type="entry name" value="Ribosomal protein S17e-like"/>
    <property type="match status" value="1"/>
</dbReference>
<dbReference type="HAMAP" id="MF_00511">
    <property type="entry name" value="Ribosomal_eS17"/>
    <property type="match status" value="1"/>
</dbReference>
<dbReference type="InterPro" id="IPR001210">
    <property type="entry name" value="Ribosomal_eS17"/>
</dbReference>
<dbReference type="InterPro" id="IPR018273">
    <property type="entry name" value="Ribosomal_eS17_CS"/>
</dbReference>
<dbReference type="InterPro" id="IPR036401">
    <property type="entry name" value="Ribosomal_eS17_sf"/>
</dbReference>
<dbReference type="NCBIfam" id="NF002242">
    <property type="entry name" value="PRK01151.1"/>
    <property type="match status" value="1"/>
</dbReference>
<dbReference type="PANTHER" id="PTHR10732">
    <property type="entry name" value="40S RIBOSOMAL PROTEIN S17"/>
    <property type="match status" value="1"/>
</dbReference>
<dbReference type="PANTHER" id="PTHR10732:SF0">
    <property type="entry name" value="40S RIBOSOMAL PROTEIN S17"/>
    <property type="match status" value="1"/>
</dbReference>
<dbReference type="Pfam" id="PF00833">
    <property type="entry name" value="Ribosomal_S17e"/>
    <property type="match status" value="1"/>
</dbReference>
<dbReference type="SUPFAM" id="SSF116820">
    <property type="entry name" value="Rps17e-like"/>
    <property type="match status" value="1"/>
</dbReference>
<dbReference type="PROSITE" id="PS00712">
    <property type="entry name" value="RIBOSOMAL_S17E"/>
    <property type="match status" value="1"/>
</dbReference>
<organism>
    <name type="scientific">Canis lupus familiaris</name>
    <name type="common">Dog</name>
    <name type="synonym">Canis familiaris</name>
    <dbReference type="NCBI Taxonomy" id="9615"/>
    <lineage>
        <taxon>Eukaryota</taxon>
        <taxon>Metazoa</taxon>
        <taxon>Chordata</taxon>
        <taxon>Craniata</taxon>
        <taxon>Vertebrata</taxon>
        <taxon>Euteleostomi</taxon>
        <taxon>Mammalia</taxon>
        <taxon>Eutheria</taxon>
        <taxon>Laurasiatheria</taxon>
        <taxon>Carnivora</taxon>
        <taxon>Caniformia</taxon>
        <taxon>Canidae</taxon>
        <taxon>Canis</taxon>
    </lineage>
</organism>